<feature type="chain" id="PRO_1000003672" description="Large ribosomal subunit protein eL20">
    <location>
        <begin position="1"/>
        <end position="78"/>
    </location>
</feature>
<protein>
    <recommendedName>
        <fullName evidence="1">Large ribosomal subunit protein eL20</fullName>
    </recommendedName>
    <alternativeName>
        <fullName evidence="2">50S ribosomal protein L18Ae</fullName>
    </alternativeName>
    <alternativeName>
        <fullName evidence="1">50S ribosomal protein L20e</fullName>
    </alternativeName>
    <alternativeName>
        <fullName evidence="1">50S ribosomal protein LX</fullName>
    </alternativeName>
</protein>
<proteinExistence type="inferred from homology"/>
<name>RL18A_PYRIL</name>
<reference key="1">
    <citation type="submission" date="2006-12" db="EMBL/GenBank/DDBJ databases">
        <title>Complete sequence of Pyrobaculum islandicum DSM 4184.</title>
        <authorList>
            <person name="Copeland A."/>
            <person name="Lucas S."/>
            <person name="Lapidus A."/>
            <person name="Barry K."/>
            <person name="Detter J.C."/>
            <person name="Glavina del Rio T."/>
            <person name="Dalin E."/>
            <person name="Tice H."/>
            <person name="Pitluck S."/>
            <person name="Meincke L."/>
            <person name="Brettin T."/>
            <person name="Bruce D."/>
            <person name="Han C."/>
            <person name="Tapia R."/>
            <person name="Gilna P."/>
            <person name="Schmutz J."/>
            <person name="Larimer F."/>
            <person name="Land M."/>
            <person name="Hauser L."/>
            <person name="Kyrpides N."/>
            <person name="Mikhailova N."/>
            <person name="Cozen A.E."/>
            <person name="Fitz-Gibbon S.T."/>
            <person name="House C.H."/>
            <person name="Saltikov C."/>
            <person name="Lowe T."/>
            <person name="Richardson P."/>
        </authorList>
    </citation>
    <scope>NUCLEOTIDE SEQUENCE [LARGE SCALE GENOMIC DNA]</scope>
    <source>
        <strain>DSM 4184 / JCM 9189 / GEO3</strain>
    </source>
</reference>
<keyword id="KW-0687">Ribonucleoprotein</keyword>
<keyword id="KW-0689">Ribosomal protein</keyword>
<keyword id="KW-0694">RNA-binding</keyword>
<keyword id="KW-0699">rRNA-binding</keyword>
<accession>A1RRQ5</accession>
<comment type="subunit">
    <text evidence="1">Part of the 50S ribosomal subunit. Binds 23S rRNA.</text>
</comment>
<comment type="similarity">
    <text evidence="1">Belongs to the eukaryotic ribosomal protein eL20 family.</text>
</comment>
<sequence>MPKIYRIVGETTTGMKFKIEVTAEKPYDAIEKVYSLIGSRHKLSRVQIKIREVTAVQPEEARSDSVKMLMAIDRVIKY</sequence>
<dbReference type="EMBL" id="CP000504">
    <property type="protein sequence ID" value="ABL87637.1"/>
    <property type="molecule type" value="Genomic_DNA"/>
</dbReference>
<dbReference type="RefSeq" id="WP_011762214.1">
    <property type="nucleotide sequence ID" value="NC_008701.1"/>
</dbReference>
<dbReference type="SMR" id="A1RRQ5"/>
<dbReference type="STRING" id="384616.Pisl_0459"/>
<dbReference type="GeneID" id="4618048"/>
<dbReference type="KEGG" id="pis:Pisl_0459"/>
<dbReference type="eggNOG" id="arCOG04175">
    <property type="taxonomic scope" value="Archaea"/>
</dbReference>
<dbReference type="HOGENOM" id="CLU_177460_0_1_2"/>
<dbReference type="OrthoDB" id="191241at2157"/>
<dbReference type="Proteomes" id="UP000002595">
    <property type="component" value="Chromosome"/>
</dbReference>
<dbReference type="GO" id="GO:1990904">
    <property type="term" value="C:ribonucleoprotein complex"/>
    <property type="evidence" value="ECO:0007669"/>
    <property type="project" value="UniProtKB-KW"/>
</dbReference>
<dbReference type="GO" id="GO:0005840">
    <property type="term" value="C:ribosome"/>
    <property type="evidence" value="ECO:0007669"/>
    <property type="project" value="UniProtKB-KW"/>
</dbReference>
<dbReference type="GO" id="GO:0070180">
    <property type="term" value="F:large ribosomal subunit rRNA binding"/>
    <property type="evidence" value="ECO:0007669"/>
    <property type="project" value="UniProtKB-UniRule"/>
</dbReference>
<dbReference type="GO" id="GO:0003735">
    <property type="term" value="F:structural constituent of ribosome"/>
    <property type="evidence" value="ECO:0007669"/>
    <property type="project" value="InterPro"/>
</dbReference>
<dbReference type="GO" id="GO:0006412">
    <property type="term" value="P:translation"/>
    <property type="evidence" value="ECO:0007669"/>
    <property type="project" value="UniProtKB-UniRule"/>
</dbReference>
<dbReference type="Gene3D" id="3.10.20.10">
    <property type="match status" value="1"/>
</dbReference>
<dbReference type="HAMAP" id="MF_00273">
    <property type="entry name" value="Ribosomal_eL20"/>
    <property type="match status" value="1"/>
</dbReference>
<dbReference type="InterPro" id="IPR028877">
    <property type="entry name" value="Ribosomal_eL20"/>
</dbReference>
<dbReference type="InterPro" id="IPR023573">
    <property type="entry name" value="Ribosomal_eL20_dom"/>
</dbReference>
<dbReference type="NCBIfam" id="NF001981">
    <property type="entry name" value="PRK00773.1-1"/>
    <property type="match status" value="1"/>
</dbReference>
<dbReference type="Pfam" id="PF01775">
    <property type="entry name" value="Ribosomal_L18A"/>
    <property type="match status" value="1"/>
</dbReference>
<dbReference type="SUPFAM" id="SSF160374">
    <property type="entry name" value="RplX-like"/>
    <property type="match status" value="1"/>
</dbReference>
<gene>
    <name evidence="1" type="primary">rpl18a</name>
    <name evidence="1" type="synonym">rpl20e</name>
    <name evidence="1" type="synonym">rplX</name>
    <name type="ordered locus">Pisl_0459</name>
</gene>
<organism>
    <name type="scientific">Pyrobaculum islandicum (strain DSM 4184 / JCM 9189 / GEO3)</name>
    <dbReference type="NCBI Taxonomy" id="384616"/>
    <lineage>
        <taxon>Archaea</taxon>
        <taxon>Thermoproteota</taxon>
        <taxon>Thermoprotei</taxon>
        <taxon>Thermoproteales</taxon>
        <taxon>Thermoproteaceae</taxon>
        <taxon>Pyrobaculum</taxon>
    </lineage>
</organism>
<evidence type="ECO:0000255" key="1">
    <source>
        <dbReference type="HAMAP-Rule" id="MF_00273"/>
    </source>
</evidence>
<evidence type="ECO:0000305" key="2"/>